<organism>
    <name type="scientific">Homo sapiens</name>
    <name type="common">Human</name>
    <dbReference type="NCBI Taxonomy" id="9606"/>
    <lineage>
        <taxon>Eukaryota</taxon>
        <taxon>Metazoa</taxon>
        <taxon>Chordata</taxon>
        <taxon>Craniata</taxon>
        <taxon>Vertebrata</taxon>
        <taxon>Euteleostomi</taxon>
        <taxon>Mammalia</taxon>
        <taxon>Eutheria</taxon>
        <taxon>Euarchontoglires</taxon>
        <taxon>Primates</taxon>
        <taxon>Haplorrhini</taxon>
        <taxon>Catarrhini</taxon>
        <taxon>Hominidae</taxon>
        <taxon>Homo</taxon>
    </lineage>
</organism>
<reference key="1">
    <citation type="journal article" date="2004" name="Nat. Genet.">
        <title>Complete sequencing and characterization of 21,243 full-length human cDNAs.</title>
        <authorList>
            <person name="Ota T."/>
            <person name="Suzuki Y."/>
            <person name="Nishikawa T."/>
            <person name="Otsuki T."/>
            <person name="Sugiyama T."/>
            <person name="Irie R."/>
            <person name="Wakamatsu A."/>
            <person name="Hayashi K."/>
            <person name="Sato H."/>
            <person name="Nagai K."/>
            <person name="Kimura K."/>
            <person name="Makita H."/>
            <person name="Sekine M."/>
            <person name="Obayashi M."/>
            <person name="Nishi T."/>
            <person name="Shibahara T."/>
            <person name="Tanaka T."/>
            <person name="Ishii S."/>
            <person name="Yamamoto J."/>
            <person name="Saito K."/>
            <person name="Kawai Y."/>
            <person name="Isono Y."/>
            <person name="Nakamura Y."/>
            <person name="Nagahari K."/>
            <person name="Murakami K."/>
            <person name="Yasuda T."/>
            <person name="Iwayanagi T."/>
            <person name="Wagatsuma M."/>
            <person name="Shiratori A."/>
            <person name="Sudo H."/>
            <person name="Hosoiri T."/>
            <person name="Kaku Y."/>
            <person name="Kodaira H."/>
            <person name="Kondo H."/>
            <person name="Sugawara M."/>
            <person name="Takahashi M."/>
            <person name="Kanda K."/>
            <person name="Yokoi T."/>
            <person name="Furuya T."/>
            <person name="Kikkawa E."/>
            <person name="Omura Y."/>
            <person name="Abe K."/>
            <person name="Kamihara K."/>
            <person name="Katsuta N."/>
            <person name="Sato K."/>
            <person name="Tanikawa M."/>
            <person name="Yamazaki M."/>
            <person name="Ninomiya K."/>
            <person name="Ishibashi T."/>
            <person name="Yamashita H."/>
            <person name="Murakawa K."/>
            <person name="Fujimori K."/>
            <person name="Tanai H."/>
            <person name="Kimata M."/>
            <person name="Watanabe M."/>
            <person name="Hiraoka S."/>
            <person name="Chiba Y."/>
            <person name="Ishida S."/>
            <person name="Ono Y."/>
            <person name="Takiguchi S."/>
            <person name="Watanabe S."/>
            <person name="Yosida M."/>
            <person name="Hotuta T."/>
            <person name="Kusano J."/>
            <person name="Kanehori K."/>
            <person name="Takahashi-Fujii A."/>
            <person name="Hara H."/>
            <person name="Tanase T.-O."/>
            <person name="Nomura Y."/>
            <person name="Togiya S."/>
            <person name="Komai F."/>
            <person name="Hara R."/>
            <person name="Takeuchi K."/>
            <person name="Arita M."/>
            <person name="Imose N."/>
            <person name="Musashino K."/>
            <person name="Yuuki H."/>
            <person name="Oshima A."/>
            <person name="Sasaki N."/>
            <person name="Aotsuka S."/>
            <person name="Yoshikawa Y."/>
            <person name="Matsunawa H."/>
            <person name="Ichihara T."/>
            <person name="Shiohata N."/>
            <person name="Sano S."/>
            <person name="Moriya S."/>
            <person name="Momiyama H."/>
            <person name="Satoh N."/>
            <person name="Takami S."/>
            <person name="Terashima Y."/>
            <person name="Suzuki O."/>
            <person name="Nakagawa S."/>
            <person name="Senoh A."/>
            <person name="Mizoguchi H."/>
            <person name="Goto Y."/>
            <person name="Shimizu F."/>
            <person name="Wakebe H."/>
            <person name="Hishigaki H."/>
            <person name="Watanabe T."/>
            <person name="Sugiyama A."/>
            <person name="Takemoto M."/>
            <person name="Kawakami B."/>
            <person name="Yamazaki M."/>
            <person name="Watanabe K."/>
            <person name="Kumagai A."/>
            <person name="Itakura S."/>
            <person name="Fukuzumi Y."/>
            <person name="Fujimori Y."/>
            <person name="Komiyama M."/>
            <person name="Tashiro H."/>
            <person name="Tanigami A."/>
            <person name="Fujiwara T."/>
            <person name="Ono T."/>
            <person name="Yamada K."/>
            <person name="Fujii Y."/>
            <person name="Ozaki K."/>
            <person name="Hirao M."/>
            <person name="Ohmori Y."/>
            <person name="Kawabata A."/>
            <person name="Hikiji T."/>
            <person name="Kobatake N."/>
            <person name="Inagaki H."/>
            <person name="Ikema Y."/>
            <person name="Okamoto S."/>
            <person name="Okitani R."/>
            <person name="Kawakami T."/>
            <person name="Noguchi S."/>
            <person name="Itoh T."/>
            <person name="Shigeta K."/>
            <person name="Senba T."/>
            <person name="Matsumura K."/>
            <person name="Nakajima Y."/>
            <person name="Mizuno T."/>
            <person name="Morinaga M."/>
            <person name="Sasaki M."/>
            <person name="Togashi T."/>
            <person name="Oyama M."/>
            <person name="Hata H."/>
            <person name="Watanabe M."/>
            <person name="Komatsu T."/>
            <person name="Mizushima-Sugano J."/>
            <person name="Satoh T."/>
            <person name="Shirai Y."/>
            <person name="Takahashi Y."/>
            <person name="Nakagawa K."/>
            <person name="Okumura K."/>
            <person name="Nagase T."/>
            <person name="Nomura N."/>
            <person name="Kikuchi H."/>
            <person name="Masuho Y."/>
            <person name="Yamashita R."/>
            <person name="Nakai K."/>
            <person name="Yada T."/>
            <person name="Nakamura Y."/>
            <person name="Ohara O."/>
            <person name="Isogai T."/>
            <person name="Sugano S."/>
        </authorList>
    </citation>
    <scope>NUCLEOTIDE SEQUENCE [LARGE SCALE MRNA] (ISOFORMS 2 AND 3)</scope>
    <scope>VARIANTS ARG-123; LYS-379 AND CYS-400</scope>
</reference>
<reference key="2">
    <citation type="journal article" date="2007" name="BMC Genomics">
        <title>The full-ORF clone resource of the German cDNA consortium.</title>
        <authorList>
            <person name="Bechtel S."/>
            <person name="Rosenfelder H."/>
            <person name="Duda A."/>
            <person name="Schmidt C.P."/>
            <person name="Ernst U."/>
            <person name="Wellenreuther R."/>
            <person name="Mehrle A."/>
            <person name="Schuster C."/>
            <person name="Bahr A."/>
            <person name="Bloecker H."/>
            <person name="Heubner D."/>
            <person name="Hoerlein A."/>
            <person name="Michel G."/>
            <person name="Wedler H."/>
            <person name="Koehrer K."/>
            <person name="Ottenwaelder B."/>
            <person name="Poustka A."/>
            <person name="Wiemann S."/>
            <person name="Schupp I."/>
        </authorList>
    </citation>
    <scope>NUCLEOTIDE SEQUENCE [LARGE SCALE MRNA] (ISOFORM 3)</scope>
    <scope>VARIANTS ARG-123 AND LYS-379</scope>
    <source>
        <tissue>Uterine endothelium</tissue>
    </source>
</reference>
<reference key="3">
    <citation type="journal article" date="2004" name="Nature">
        <title>The DNA sequence and biology of human chromosome 19.</title>
        <authorList>
            <person name="Grimwood J."/>
            <person name="Gordon L.A."/>
            <person name="Olsen A.S."/>
            <person name="Terry A."/>
            <person name="Schmutz J."/>
            <person name="Lamerdin J.E."/>
            <person name="Hellsten U."/>
            <person name="Goodstein D."/>
            <person name="Couronne O."/>
            <person name="Tran-Gyamfi M."/>
            <person name="Aerts A."/>
            <person name="Altherr M."/>
            <person name="Ashworth L."/>
            <person name="Bajorek E."/>
            <person name="Black S."/>
            <person name="Branscomb E."/>
            <person name="Caenepeel S."/>
            <person name="Carrano A.V."/>
            <person name="Caoile C."/>
            <person name="Chan Y.M."/>
            <person name="Christensen M."/>
            <person name="Cleland C.A."/>
            <person name="Copeland A."/>
            <person name="Dalin E."/>
            <person name="Dehal P."/>
            <person name="Denys M."/>
            <person name="Detter J.C."/>
            <person name="Escobar J."/>
            <person name="Flowers D."/>
            <person name="Fotopulos D."/>
            <person name="Garcia C."/>
            <person name="Georgescu A.M."/>
            <person name="Glavina T."/>
            <person name="Gomez M."/>
            <person name="Gonzales E."/>
            <person name="Groza M."/>
            <person name="Hammon N."/>
            <person name="Hawkins T."/>
            <person name="Haydu L."/>
            <person name="Ho I."/>
            <person name="Huang W."/>
            <person name="Israni S."/>
            <person name="Jett J."/>
            <person name="Kadner K."/>
            <person name="Kimball H."/>
            <person name="Kobayashi A."/>
            <person name="Larionov V."/>
            <person name="Leem S.-H."/>
            <person name="Lopez F."/>
            <person name="Lou Y."/>
            <person name="Lowry S."/>
            <person name="Malfatti S."/>
            <person name="Martinez D."/>
            <person name="McCready P.M."/>
            <person name="Medina C."/>
            <person name="Morgan J."/>
            <person name="Nelson K."/>
            <person name="Nolan M."/>
            <person name="Ovcharenko I."/>
            <person name="Pitluck S."/>
            <person name="Pollard M."/>
            <person name="Popkie A.P."/>
            <person name="Predki P."/>
            <person name="Quan G."/>
            <person name="Ramirez L."/>
            <person name="Rash S."/>
            <person name="Retterer J."/>
            <person name="Rodriguez A."/>
            <person name="Rogers S."/>
            <person name="Salamov A."/>
            <person name="Salazar A."/>
            <person name="She X."/>
            <person name="Smith D."/>
            <person name="Slezak T."/>
            <person name="Solovyev V."/>
            <person name="Thayer N."/>
            <person name="Tice H."/>
            <person name="Tsai M."/>
            <person name="Ustaszewska A."/>
            <person name="Vo N."/>
            <person name="Wagner M."/>
            <person name="Wheeler J."/>
            <person name="Wu K."/>
            <person name="Xie G."/>
            <person name="Yang J."/>
            <person name="Dubchak I."/>
            <person name="Furey T.S."/>
            <person name="DeJong P."/>
            <person name="Dickson M."/>
            <person name="Gordon D."/>
            <person name="Eichler E.E."/>
            <person name="Pennacchio L.A."/>
            <person name="Richardson P."/>
            <person name="Stubbs L."/>
            <person name="Rokhsar D.S."/>
            <person name="Myers R.M."/>
            <person name="Rubin E.M."/>
            <person name="Lucas S.M."/>
        </authorList>
    </citation>
    <scope>NUCLEOTIDE SEQUENCE [LARGE SCALE GENOMIC DNA]</scope>
    <scope>VARIANT ARG-123</scope>
</reference>
<reference key="4">
    <citation type="journal article" date="2004" name="Genome Res.">
        <title>The status, quality, and expansion of the NIH full-length cDNA project: the Mammalian Gene Collection (MGC).</title>
        <authorList>
            <consortium name="The MGC Project Team"/>
        </authorList>
    </citation>
    <scope>NUCLEOTIDE SEQUENCE [LARGE SCALE MRNA] (ISOFORM 1)</scope>
</reference>
<reference key="5">
    <citation type="journal article" date="1990" name="New Biol.">
        <title>Multiple genes encoding zinc finger domains are expressed in human T cells.</title>
        <authorList>
            <person name="Thiesen H.-J."/>
        </authorList>
    </citation>
    <scope>NUCLEOTIDE SEQUENCE [MRNA] OF 484-623</scope>
    <source>
        <tissue>Lymphoid tissue</tissue>
    </source>
</reference>
<name>ZNF30_HUMAN</name>
<evidence type="ECO:0000255" key="1">
    <source>
        <dbReference type="PROSITE-ProRule" id="PRU00042"/>
    </source>
</evidence>
<evidence type="ECO:0000255" key="2">
    <source>
        <dbReference type="PROSITE-ProRule" id="PRU00119"/>
    </source>
</evidence>
<evidence type="ECO:0000269" key="3">
    <source>
    </source>
</evidence>
<evidence type="ECO:0000269" key="4">
    <source>
    </source>
</evidence>
<evidence type="ECO:0000269" key="5">
    <source>
    </source>
</evidence>
<evidence type="ECO:0000303" key="6">
    <source>
    </source>
</evidence>
<evidence type="ECO:0000303" key="7">
    <source>
    </source>
</evidence>
<evidence type="ECO:0000305" key="8"/>
<accession>P17039</accession>
<accession>A5PLP1</accession>
<accession>A8K320</accession>
<accession>B4DIC0</accession>
<accession>Q6N068</accession>
<proteinExistence type="evidence at protein level"/>
<sequence>MAHKYVGLQYHGSVTFEDVAIAFSQQEWESLDSSQRGLYRDVMLENYRNLVSMGHSRSKPHVIALLEQWKEPEVTVRKDGRRWCTDLQLEDDTIGCKEMPTSENCPSFALHQKISRQKPRECQEYGKTLCQDSKPVQHERIHSSEKPNRCKECGKNFSNGHQLTIHQRLHVGEKPYKYEKCGKAFISGSAFVKHGRIHTGEKPLKCKQCGKTISGSYQLTVHKSIHTGKKPYECGECGKAFLVYGKLTRHQSTHTGEKPFGCEECGKAFSTFSYLVQHQRIHTSEKPYECKECGKAFSTSSPLAKHQRIHTGEKPYECKECGKSFTVYGQLTRHQSIHTGEKPFECKECGKAFRLSSFLHAHQRIHAEIKPYGCKECGRTFSRASYLVQHGRLHTGEKPYECKECGKAFSTGSYLVQHQRIHTGEKPYECKECGKAFISRHQLTVHQRVHTGEKPYECKECGKAFRVHVHLTQHRKIHTDVKPYECKECGKTFSRASYLVQHSRIHTGKKPYECKECGKAFSSGSYLVQHQRIHTGEKPYECNKCGKAFTVYGQLIGHQSVHTGEKPFECKECGKAFRLNSFLTEHQRVHTGEKPFKCKKCGKTFRYSSALKVHLRKHMSVIP</sequence>
<dbReference type="EMBL" id="AK295515">
    <property type="protein sequence ID" value="BAG58432.1"/>
    <property type="molecule type" value="mRNA"/>
</dbReference>
<dbReference type="EMBL" id="AK290435">
    <property type="protein sequence ID" value="BAF83124.1"/>
    <property type="molecule type" value="mRNA"/>
</dbReference>
<dbReference type="EMBL" id="BX640666">
    <property type="protein sequence ID" value="CAE45802.1"/>
    <property type="molecule type" value="mRNA"/>
</dbReference>
<dbReference type="EMBL" id="AC008555">
    <property type="status" value="NOT_ANNOTATED_CDS"/>
    <property type="molecule type" value="Genomic_DNA"/>
</dbReference>
<dbReference type="EMBL" id="BC142996">
    <property type="protein sequence ID" value="AAI42997.1"/>
    <property type="molecule type" value="mRNA"/>
</dbReference>
<dbReference type="EMBL" id="X52359">
    <property type="protein sequence ID" value="CAA36585.1"/>
    <property type="molecule type" value="mRNA"/>
</dbReference>
<dbReference type="CCDS" id="CCDS46044.1">
    <molecule id="P17039-2"/>
</dbReference>
<dbReference type="CCDS" id="CCDS46045.1">
    <molecule id="P17039-1"/>
</dbReference>
<dbReference type="PIR" id="I37968">
    <property type="entry name" value="I37968"/>
</dbReference>
<dbReference type="RefSeq" id="NP_001092907.1">
    <molecule id="P17039-2"/>
    <property type="nucleotide sequence ID" value="NM_001099437.2"/>
</dbReference>
<dbReference type="RefSeq" id="NP_001092908.1">
    <molecule id="P17039-2"/>
    <property type="nucleotide sequence ID" value="NM_001099438.2"/>
</dbReference>
<dbReference type="RefSeq" id="NP_919306.2">
    <molecule id="P17039-1"/>
    <property type="nucleotide sequence ID" value="NM_194325.3"/>
</dbReference>
<dbReference type="RefSeq" id="XP_011525745.1">
    <molecule id="P17039-2"/>
    <property type="nucleotide sequence ID" value="XM_011527443.3"/>
</dbReference>
<dbReference type="RefSeq" id="XP_011525746.1">
    <molecule id="P17039-2"/>
    <property type="nucleotide sequence ID" value="XM_011527444.2"/>
</dbReference>
<dbReference type="RefSeq" id="XP_016882912.1">
    <property type="nucleotide sequence ID" value="XM_017027423.1"/>
</dbReference>
<dbReference type="RefSeq" id="XP_016882913.1">
    <molecule id="P17039-2"/>
    <property type="nucleotide sequence ID" value="XM_017027424.2"/>
</dbReference>
<dbReference type="RefSeq" id="XP_016882914.1">
    <molecule id="P17039-1"/>
    <property type="nucleotide sequence ID" value="XM_017027425.2"/>
</dbReference>
<dbReference type="RefSeq" id="XP_016882915.1">
    <molecule id="P17039-1"/>
    <property type="nucleotide sequence ID" value="XM_017027426.2"/>
</dbReference>
<dbReference type="RefSeq" id="XP_016882916.1">
    <property type="nucleotide sequence ID" value="XM_017027427.1"/>
</dbReference>
<dbReference type="RefSeq" id="XP_016882917.1">
    <property type="nucleotide sequence ID" value="XM_017027428.1"/>
</dbReference>
<dbReference type="RefSeq" id="XP_016882918.1">
    <property type="nucleotide sequence ID" value="XM_017027429.1"/>
</dbReference>
<dbReference type="RefSeq" id="XP_054178475.1">
    <molecule id="P17039-2"/>
    <property type="nucleotide sequence ID" value="XM_054322500.1"/>
</dbReference>
<dbReference type="RefSeq" id="XP_054178476.1">
    <molecule id="P17039-2"/>
    <property type="nucleotide sequence ID" value="XM_054322501.1"/>
</dbReference>
<dbReference type="RefSeq" id="XP_054178477.1">
    <molecule id="P17039-2"/>
    <property type="nucleotide sequence ID" value="XM_054322502.1"/>
</dbReference>
<dbReference type="RefSeq" id="XP_054178478.1">
    <molecule id="P17039-1"/>
    <property type="nucleotide sequence ID" value="XM_054322503.1"/>
</dbReference>
<dbReference type="RefSeq" id="XP_054178479.1">
    <molecule id="P17039-1"/>
    <property type="nucleotide sequence ID" value="XM_054322504.1"/>
</dbReference>
<dbReference type="SMR" id="P17039"/>
<dbReference type="BioGRID" id="124660">
    <property type="interactions" value="42"/>
</dbReference>
<dbReference type="FunCoup" id="P17039">
    <property type="interactions" value="56"/>
</dbReference>
<dbReference type="IntAct" id="P17039">
    <property type="interactions" value="4"/>
</dbReference>
<dbReference type="STRING" id="9606.ENSP00000403441"/>
<dbReference type="GlyGen" id="P17039">
    <property type="glycosylation" value="1 site, 1 O-linked glycan (1 site)"/>
</dbReference>
<dbReference type="iPTMnet" id="P17039"/>
<dbReference type="PhosphoSitePlus" id="P17039"/>
<dbReference type="BioMuta" id="ZNF30"/>
<dbReference type="DMDM" id="332278252"/>
<dbReference type="jPOST" id="P17039"/>
<dbReference type="MassIVE" id="P17039"/>
<dbReference type="PaxDb" id="9606-ENSP00000403441"/>
<dbReference type="PeptideAtlas" id="P17039"/>
<dbReference type="ProteomicsDB" id="53442">
    <molecule id="P17039-1"/>
</dbReference>
<dbReference type="ProteomicsDB" id="53443">
    <molecule id="P17039-2"/>
</dbReference>
<dbReference type="ProteomicsDB" id="53444">
    <molecule id="P17039-3"/>
</dbReference>
<dbReference type="Pumba" id="P17039"/>
<dbReference type="Antibodypedia" id="29216">
    <property type="antibodies" value="78 antibodies from 17 providers"/>
</dbReference>
<dbReference type="DNASU" id="90075"/>
<dbReference type="Ensembl" id="ENST00000303586.11">
    <molecule id="P17039-2"/>
    <property type="protein sequence ID" value="ENSP00000303889.7"/>
    <property type="gene ID" value="ENSG00000168661.15"/>
</dbReference>
<dbReference type="Ensembl" id="ENST00000439785.5">
    <molecule id="P17039-2"/>
    <property type="protein sequence ID" value="ENSP00000403441.1"/>
    <property type="gene ID" value="ENSG00000168661.15"/>
</dbReference>
<dbReference type="Ensembl" id="ENST00000601142.2">
    <molecule id="P17039-1"/>
    <property type="protein sequence ID" value="ENSP00000469954.1"/>
    <property type="gene ID" value="ENSG00000168661.15"/>
</dbReference>
<dbReference type="Ensembl" id="ENST00000601957.5">
    <molecule id="P17039-3"/>
    <property type="protein sequence ID" value="ENSP00000470094.1"/>
    <property type="gene ID" value="ENSG00000168661.15"/>
</dbReference>
<dbReference type="GeneID" id="90075"/>
<dbReference type="KEGG" id="hsa:90075"/>
<dbReference type="MANE-Select" id="ENST00000601142.2">
    <property type="protein sequence ID" value="ENSP00000469954.1"/>
    <property type="RefSeq nucleotide sequence ID" value="NM_194325.3"/>
    <property type="RefSeq protein sequence ID" value="NP_919306.2"/>
</dbReference>
<dbReference type="UCSC" id="uc010edp.2">
    <molecule id="P17039-1"/>
    <property type="organism name" value="human"/>
</dbReference>
<dbReference type="AGR" id="HGNC:13090"/>
<dbReference type="CTD" id="90075"/>
<dbReference type="GeneCards" id="ZNF30"/>
<dbReference type="HGNC" id="HGNC:13090">
    <property type="gene designation" value="ZNF30"/>
</dbReference>
<dbReference type="HPA" id="ENSG00000168661">
    <property type="expression patterns" value="Tissue enhanced (brain, retina)"/>
</dbReference>
<dbReference type="neXtProt" id="NX_P17039"/>
<dbReference type="OpenTargets" id="ENSG00000168661"/>
<dbReference type="PharmGKB" id="PA37665"/>
<dbReference type="VEuPathDB" id="HostDB:ENSG00000168661"/>
<dbReference type="eggNOG" id="KOG1721">
    <property type="taxonomic scope" value="Eukaryota"/>
</dbReference>
<dbReference type="GeneTree" id="ENSGT00940000164353"/>
<dbReference type="HOGENOM" id="CLU_002678_44_5_1"/>
<dbReference type="InParanoid" id="P17039"/>
<dbReference type="OMA" id="KAFIVYG"/>
<dbReference type="OrthoDB" id="9411774at2759"/>
<dbReference type="PAN-GO" id="P17039">
    <property type="GO annotations" value="4 GO annotations based on evolutionary models"/>
</dbReference>
<dbReference type="TreeFam" id="TF341817"/>
<dbReference type="PathwayCommons" id="P17039"/>
<dbReference type="Reactome" id="R-HSA-212436">
    <property type="pathway name" value="Generic Transcription Pathway"/>
</dbReference>
<dbReference type="Reactome" id="R-HSA-9843940">
    <property type="pathway name" value="Regulation of endogenous retroelements by KRAB-ZFP proteins"/>
</dbReference>
<dbReference type="SignaLink" id="P17039"/>
<dbReference type="BioGRID-ORCS" id="90075">
    <property type="hits" value="10 hits in 1173 CRISPR screens"/>
</dbReference>
<dbReference type="ChiTaRS" id="ZNF30">
    <property type="organism name" value="human"/>
</dbReference>
<dbReference type="GenomeRNAi" id="90075"/>
<dbReference type="Pharos" id="P17039">
    <property type="development level" value="Tdark"/>
</dbReference>
<dbReference type="PRO" id="PR:P17039"/>
<dbReference type="Proteomes" id="UP000005640">
    <property type="component" value="Chromosome 19"/>
</dbReference>
<dbReference type="RNAct" id="P17039">
    <property type="molecule type" value="protein"/>
</dbReference>
<dbReference type="Bgee" id="ENSG00000168661">
    <property type="expression patterns" value="Expressed in primordial germ cell in gonad and 158 other cell types or tissues"/>
</dbReference>
<dbReference type="ExpressionAtlas" id="P17039">
    <property type="expression patterns" value="baseline and differential"/>
</dbReference>
<dbReference type="GO" id="GO:0005634">
    <property type="term" value="C:nucleus"/>
    <property type="evidence" value="ECO:0000318"/>
    <property type="project" value="GO_Central"/>
</dbReference>
<dbReference type="GO" id="GO:0000981">
    <property type="term" value="F:DNA-binding transcription factor activity, RNA polymerase II-specific"/>
    <property type="evidence" value="ECO:0000318"/>
    <property type="project" value="GO_Central"/>
</dbReference>
<dbReference type="GO" id="GO:0000978">
    <property type="term" value="F:RNA polymerase II cis-regulatory region sequence-specific DNA binding"/>
    <property type="evidence" value="ECO:0000318"/>
    <property type="project" value="GO_Central"/>
</dbReference>
<dbReference type="GO" id="GO:0008270">
    <property type="term" value="F:zinc ion binding"/>
    <property type="evidence" value="ECO:0007669"/>
    <property type="project" value="UniProtKB-KW"/>
</dbReference>
<dbReference type="GO" id="GO:0006357">
    <property type="term" value="P:regulation of transcription by RNA polymerase II"/>
    <property type="evidence" value="ECO:0000318"/>
    <property type="project" value="GO_Central"/>
</dbReference>
<dbReference type="CDD" id="cd07765">
    <property type="entry name" value="KRAB_A-box"/>
    <property type="match status" value="1"/>
</dbReference>
<dbReference type="FunFam" id="3.30.160.60:FF:000020">
    <property type="entry name" value="Zinc finger protein 14 homolog"/>
    <property type="match status" value="2"/>
</dbReference>
<dbReference type="FunFam" id="3.30.160.60:FF:000638">
    <property type="entry name" value="Zinc finger protein 184"/>
    <property type="match status" value="1"/>
</dbReference>
<dbReference type="FunFam" id="3.30.160.60:FF:000551">
    <property type="entry name" value="zinc finger protein 197 isoform X1"/>
    <property type="match status" value="1"/>
</dbReference>
<dbReference type="FunFam" id="3.30.160.60:FF:000058">
    <property type="entry name" value="Zinc finger protein 2 homolog"/>
    <property type="match status" value="1"/>
</dbReference>
<dbReference type="FunFam" id="3.30.160.60:FF:000944">
    <property type="entry name" value="zinc finger protein 232 isoform X1"/>
    <property type="match status" value="1"/>
</dbReference>
<dbReference type="FunFam" id="3.30.160.60:FF:003142">
    <property type="entry name" value="Zinc finger protein 30"/>
    <property type="match status" value="1"/>
</dbReference>
<dbReference type="FunFam" id="3.30.160.60:FF:002343">
    <property type="entry name" value="Zinc finger protein 33A"/>
    <property type="match status" value="1"/>
</dbReference>
<dbReference type="FunFam" id="3.30.160.60:FF:000338">
    <property type="entry name" value="zinc finger protein 383"/>
    <property type="match status" value="1"/>
</dbReference>
<dbReference type="FunFam" id="3.30.160.60:FF:002254">
    <property type="entry name" value="Zinc finger protein 540"/>
    <property type="match status" value="4"/>
</dbReference>
<dbReference type="FunFam" id="3.30.160.60:FF:000052">
    <property type="entry name" value="zinc finger protein 546 isoform X1"/>
    <property type="match status" value="1"/>
</dbReference>
<dbReference type="FunFam" id="3.30.160.60:FF:000737">
    <property type="entry name" value="Zinc finger protein 565"/>
    <property type="match status" value="1"/>
</dbReference>
<dbReference type="FunFam" id="3.30.160.60:FF:000094">
    <property type="entry name" value="Zinc finger protein 605"/>
    <property type="match status" value="2"/>
</dbReference>
<dbReference type="Gene3D" id="6.10.140.140">
    <property type="match status" value="1"/>
</dbReference>
<dbReference type="Gene3D" id="3.30.160.60">
    <property type="entry name" value="Classic Zinc Finger"/>
    <property type="match status" value="18"/>
</dbReference>
<dbReference type="InterPro" id="IPR001909">
    <property type="entry name" value="KRAB"/>
</dbReference>
<dbReference type="InterPro" id="IPR036051">
    <property type="entry name" value="KRAB_dom_sf"/>
</dbReference>
<dbReference type="InterPro" id="IPR050826">
    <property type="entry name" value="Krueppel_C2H2_ZnFinger"/>
</dbReference>
<dbReference type="InterPro" id="IPR036236">
    <property type="entry name" value="Znf_C2H2_sf"/>
</dbReference>
<dbReference type="InterPro" id="IPR013087">
    <property type="entry name" value="Znf_C2H2_type"/>
</dbReference>
<dbReference type="PANTHER" id="PTHR24377">
    <property type="entry name" value="IP01015P-RELATED"/>
    <property type="match status" value="1"/>
</dbReference>
<dbReference type="Pfam" id="PF01352">
    <property type="entry name" value="KRAB"/>
    <property type="match status" value="1"/>
</dbReference>
<dbReference type="Pfam" id="PF00096">
    <property type="entry name" value="zf-C2H2"/>
    <property type="match status" value="15"/>
</dbReference>
<dbReference type="SMART" id="SM00349">
    <property type="entry name" value="KRAB"/>
    <property type="match status" value="1"/>
</dbReference>
<dbReference type="SMART" id="SM00355">
    <property type="entry name" value="ZnF_C2H2"/>
    <property type="match status" value="17"/>
</dbReference>
<dbReference type="SUPFAM" id="SSF57667">
    <property type="entry name" value="beta-beta-alpha zinc fingers"/>
    <property type="match status" value="10"/>
</dbReference>
<dbReference type="SUPFAM" id="SSF109640">
    <property type="entry name" value="KRAB domain (Kruppel-associated box)"/>
    <property type="match status" value="1"/>
</dbReference>
<dbReference type="PROSITE" id="PS50805">
    <property type="entry name" value="KRAB"/>
    <property type="match status" value="1"/>
</dbReference>
<dbReference type="PROSITE" id="PS00028">
    <property type="entry name" value="ZINC_FINGER_C2H2_1"/>
    <property type="match status" value="16"/>
</dbReference>
<dbReference type="PROSITE" id="PS50157">
    <property type="entry name" value="ZINC_FINGER_C2H2_2"/>
    <property type="match status" value="18"/>
</dbReference>
<comment type="function">
    <text>May be involved in transcriptional regulation.</text>
</comment>
<comment type="subcellular location">
    <subcellularLocation>
        <location evidence="8">Nucleus</location>
    </subcellularLocation>
</comment>
<comment type="alternative products">
    <event type="alternative splicing"/>
    <isoform>
        <id>P17039-1</id>
        <name>1</name>
        <sequence type="displayed"/>
    </isoform>
    <isoform>
        <id>P17039-2</id>
        <name>2</name>
        <sequence type="described" ref="VSP_040942"/>
    </isoform>
    <isoform>
        <id>P17039-3</id>
        <name>3</name>
        <sequence type="described" ref="VSP_040943 VSP_040944"/>
    </isoform>
</comment>
<comment type="miscellaneous">
    <molecule>Isoform 3</molecule>
    <text evidence="8">May be produced at very low levels due to a premature stop codon in the mRNA, leading to nonsense-mediated mRNA decay.</text>
</comment>
<comment type="similarity">
    <text evidence="8">Belongs to the krueppel C2H2-type zinc-finger protein family.</text>
</comment>
<feature type="chain" id="PRO_0000047359" description="Zinc finger protein 30">
    <location>
        <begin position="1"/>
        <end position="623"/>
    </location>
</feature>
<feature type="domain" description="KRAB" evidence="2">
    <location>
        <begin position="14"/>
        <end position="85"/>
    </location>
</feature>
<feature type="zinc finger region" description="C2H2-type 1; degenerate" evidence="1">
    <location>
        <begin position="120"/>
        <end position="142"/>
    </location>
</feature>
<feature type="zinc finger region" description="C2H2-type 2" evidence="1">
    <location>
        <begin position="148"/>
        <end position="170"/>
    </location>
</feature>
<feature type="zinc finger region" description="C2H2-type 3; degenerate" evidence="1">
    <location>
        <begin position="176"/>
        <end position="198"/>
    </location>
</feature>
<feature type="zinc finger region" description="C2H2-type 4" evidence="1">
    <location>
        <begin position="204"/>
        <end position="226"/>
    </location>
</feature>
<feature type="zinc finger region" description="C2H2-type 5" evidence="1">
    <location>
        <begin position="232"/>
        <end position="254"/>
    </location>
</feature>
<feature type="zinc finger region" description="C2H2-type 6" evidence="1">
    <location>
        <begin position="260"/>
        <end position="282"/>
    </location>
</feature>
<feature type="zinc finger region" description="C2H2-type 7" evidence="1">
    <location>
        <begin position="288"/>
        <end position="310"/>
    </location>
</feature>
<feature type="zinc finger region" description="C2H2-type 8" evidence="1">
    <location>
        <begin position="316"/>
        <end position="338"/>
    </location>
</feature>
<feature type="zinc finger region" description="C2H2-type 9" evidence="1">
    <location>
        <begin position="344"/>
        <end position="366"/>
    </location>
</feature>
<feature type="zinc finger region" description="C2H2-type 10" evidence="1">
    <location>
        <begin position="372"/>
        <end position="394"/>
    </location>
</feature>
<feature type="zinc finger region" description="C2H2-type 11" evidence="1">
    <location>
        <begin position="400"/>
        <end position="422"/>
    </location>
</feature>
<feature type="zinc finger region" description="C2H2-type 12" evidence="1">
    <location>
        <begin position="428"/>
        <end position="450"/>
    </location>
</feature>
<feature type="zinc finger region" description="C2H2-type 13" evidence="1">
    <location>
        <begin position="456"/>
        <end position="478"/>
    </location>
</feature>
<feature type="zinc finger region" description="C2H2-type 14" evidence="1">
    <location>
        <begin position="484"/>
        <end position="506"/>
    </location>
</feature>
<feature type="zinc finger region" description="C2H2-type 15" evidence="1">
    <location>
        <begin position="512"/>
        <end position="534"/>
    </location>
</feature>
<feature type="zinc finger region" description="C2H2-type 16" evidence="1">
    <location>
        <begin position="540"/>
        <end position="562"/>
    </location>
</feature>
<feature type="zinc finger region" description="C2H2-type 17" evidence="1">
    <location>
        <begin position="568"/>
        <end position="590"/>
    </location>
</feature>
<feature type="zinc finger region" description="C2H2-type 18" evidence="1">
    <location>
        <begin position="596"/>
        <end position="618"/>
    </location>
</feature>
<feature type="splice variant" id="VSP_040942" description="In isoform 2." evidence="6">
    <original>M</original>
    <variation>MA</variation>
    <location>
        <position position="53"/>
    </location>
</feature>
<feature type="splice variant" id="VSP_040943" description="In isoform 3." evidence="6 7">
    <original>D</original>
    <variation>G</variation>
    <location>
        <position position="86"/>
    </location>
</feature>
<feature type="splice variant" id="VSP_040944" description="In isoform 3." evidence="6 7">
    <location>
        <begin position="87"/>
        <end position="623"/>
    </location>
</feature>
<feature type="sequence variant" id="VAR_047736" description="In dbSNP:rs1811." evidence="3 4 5">
    <original>Q</original>
    <variation>R</variation>
    <location>
        <position position="123"/>
    </location>
</feature>
<feature type="sequence variant" id="VAR_047737" description="In dbSNP:rs8100497.">
    <original>A</original>
    <variation>T</variation>
    <location>
        <position position="190"/>
    </location>
</feature>
<feature type="sequence variant" id="VAR_047738" description="In dbSNP:rs1345658." evidence="3 5">
    <original>R</original>
    <variation>K</variation>
    <location>
        <position position="379"/>
    </location>
</feature>
<feature type="sequence variant" id="VAR_047739" description="In dbSNP:rs765746." evidence="3">
    <original>Y</original>
    <variation>C</variation>
    <location>
        <position position="400"/>
    </location>
</feature>
<feature type="sequence conflict" description="In Ref. 1; BAG58432." evidence="8" ref="1">
    <original>V</original>
    <variation>M</variation>
    <location>
        <position position="14"/>
    </location>
</feature>
<feature type="sequence conflict" description="In Ref. 1; BAG58432." evidence="8" ref="1">
    <original>S</original>
    <variation>F</variation>
    <location>
        <position position="24"/>
    </location>
</feature>
<feature type="sequence conflict" description="In Ref. 2; CAE45802." evidence="8" ref="2">
    <original>K</original>
    <variation>R</variation>
    <location>
        <position position="193"/>
    </location>
</feature>
<feature type="sequence conflict" description="In Ref. 2; CAE45802." evidence="8" ref="2">
    <original>G</original>
    <variation>W</variation>
    <location>
        <position position="238"/>
    </location>
</feature>
<feature type="sequence conflict" description="In Ref. 2; CAE45802." evidence="8" ref="2">
    <original>A</original>
    <variation>V</variation>
    <location>
        <position position="304"/>
    </location>
</feature>
<feature type="sequence conflict" description="In Ref. 4; AAI42997." evidence="8" ref="4">
    <original>T</original>
    <variation>A</variation>
    <location>
        <position position="492"/>
    </location>
</feature>
<feature type="sequence conflict" description="In Ref. 2; CAE45802." evidence="8" ref="2">
    <original>F</original>
    <variation>L</variation>
    <location>
        <position position="493"/>
    </location>
</feature>
<gene>
    <name type="primary">ZNF30</name>
    <name type="synonym">KOX28</name>
</gene>
<protein>
    <recommendedName>
        <fullName>Zinc finger protein 30</fullName>
    </recommendedName>
    <alternativeName>
        <fullName>Zinc finger protein KOX28</fullName>
    </alternativeName>
</protein>
<keyword id="KW-0025">Alternative splicing</keyword>
<keyword id="KW-0238">DNA-binding</keyword>
<keyword id="KW-0479">Metal-binding</keyword>
<keyword id="KW-0539">Nucleus</keyword>
<keyword id="KW-1267">Proteomics identification</keyword>
<keyword id="KW-1185">Reference proteome</keyword>
<keyword id="KW-0677">Repeat</keyword>
<keyword id="KW-0804">Transcription</keyword>
<keyword id="KW-0805">Transcription regulation</keyword>
<keyword id="KW-0862">Zinc</keyword>
<keyword id="KW-0863">Zinc-finger</keyword>